<name>SUB5_ARTOC</name>
<gene>
    <name type="primary">SUB5</name>
    <name type="ORF">MCYG_08753</name>
</gene>
<sequence length="395" mass="41601">MGFLTVLYLSLAALSVTNAAQIMSAPNGAEVVPNGYIVVMKDDTSKQDFASHRVWVSGIHHNITRRGLDGEGVKQTYDFDNLRGYSGIFDKDTIKDISNDPKVAFVEPDAIISQHVVVQQRKAPWGLSRLSNRKGGRNYVFDSTAGAGVWAYVVDSGVDIRHAEFRGRAVWGSNQVDNQNSDGTGHGTHVAGTIAGKTYGIAKKAKVIAVKVLNSEGKGPTSGIIAGINWSINNARQNGMLHKSVINMSLGGSYSAGLNHATAQAIKAGIFVSVSAGNDNINSNNNSPASEKSVCTIAASTEDDGKASFSNWGPAVDLYAPGHNILSARPGGGSQVMSGTSMAAPHACGVAAYLIAKEGIPGSRACLRLKQLSQPTIHNPGPDTTRRLLYNGSGR</sequence>
<accession>C5G1D1</accession>
<comment type="function">
    <text evidence="1">Secreted subtilisin-like serine protease with keratinolytic activity that contributes to pathogenicity.</text>
</comment>
<comment type="subcellular location">
    <subcellularLocation>
        <location evidence="1">Secreted</location>
    </subcellularLocation>
</comment>
<comment type="similarity">
    <text evidence="5">Belongs to the peptidase S8 family.</text>
</comment>
<feature type="signal peptide" evidence="2">
    <location>
        <begin position="1"/>
        <end position="19"/>
    </location>
</feature>
<feature type="propeptide" id="PRO_0000384071" evidence="1">
    <location>
        <begin position="20"/>
        <end position="115"/>
    </location>
</feature>
<feature type="chain" id="PRO_0000384072" description="Subtilisin-like protease 5">
    <location>
        <begin position="116"/>
        <end position="395"/>
    </location>
</feature>
<feature type="domain" description="Inhibitor I9" evidence="2">
    <location>
        <begin position="36"/>
        <end position="112"/>
    </location>
</feature>
<feature type="domain" description="Peptidase S8" evidence="3">
    <location>
        <begin position="124"/>
        <end position="395"/>
    </location>
</feature>
<feature type="region of interest" description="Disordered" evidence="4">
    <location>
        <begin position="374"/>
        <end position="395"/>
    </location>
</feature>
<feature type="active site" description="Charge relay system" evidence="3">
    <location>
        <position position="155"/>
    </location>
</feature>
<feature type="active site" description="Charge relay system" evidence="3">
    <location>
        <position position="186"/>
    </location>
</feature>
<feature type="active site" description="Charge relay system" evidence="3">
    <location>
        <position position="341"/>
    </location>
</feature>
<feature type="glycosylation site" description="N-linked (GlcNAc...) asparagine" evidence="2">
    <location>
        <position position="229"/>
    </location>
</feature>
<feature type="glycosylation site" description="N-linked (GlcNAc...) asparagine" evidence="2">
    <location>
        <position position="247"/>
    </location>
</feature>
<feature type="glycosylation site" description="N-linked (GlcNAc...) asparagine" evidence="2">
    <location>
        <position position="391"/>
    </location>
</feature>
<dbReference type="EC" id="3.4.21.-"/>
<dbReference type="EMBL" id="DS995710">
    <property type="protein sequence ID" value="EEQ28594.1"/>
    <property type="molecule type" value="Genomic_DNA"/>
</dbReference>
<dbReference type="RefSeq" id="XP_002842613.1">
    <property type="nucleotide sequence ID" value="XM_002842567.1"/>
</dbReference>
<dbReference type="SMR" id="C5G1D1"/>
<dbReference type="STRING" id="554155.C5G1D1"/>
<dbReference type="GlyCosmos" id="C5G1D1">
    <property type="glycosylation" value="3 sites, No reported glycans"/>
</dbReference>
<dbReference type="GeneID" id="9226546"/>
<dbReference type="VEuPathDB" id="FungiDB:MCYG_08753"/>
<dbReference type="eggNOG" id="KOG1153">
    <property type="taxonomic scope" value="Eukaryota"/>
</dbReference>
<dbReference type="HOGENOM" id="CLU_011263_1_3_1"/>
<dbReference type="OMA" id="DLYAPGH"/>
<dbReference type="OrthoDB" id="206201at2759"/>
<dbReference type="Proteomes" id="UP000002035">
    <property type="component" value="Unassembled WGS sequence"/>
</dbReference>
<dbReference type="GO" id="GO:0005576">
    <property type="term" value="C:extracellular region"/>
    <property type="evidence" value="ECO:0007669"/>
    <property type="project" value="UniProtKB-SubCell"/>
</dbReference>
<dbReference type="GO" id="GO:0004252">
    <property type="term" value="F:serine-type endopeptidase activity"/>
    <property type="evidence" value="ECO:0007669"/>
    <property type="project" value="InterPro"/>
</dbReference>
<dbReference type="GO" id="GO:0006508">
    <property type="term" value="P:proteolysis"/>
    <property type="evidence" value="ECO:0007669"/>
    <property type="project" value="UniProtKB-KW"/>
</dbReference>
<dbReference type="CDD" id="cd04077">
    <property type="entry name" value="Peptidases_S8_PCSK9_ProteinaseK_like"/>
    <property type="match status" value="1"/>
</dbReference>
<dbReference type="FunFam" id="3.40.50.200:FF:000014">
    <property type="entry name" value="Proteinase K"/>
    <property type="match status" value="1"/>
</dbReference>
<dbReference type="Gene3D" id="3.30.70.80">
    <property type="entry name" value="Peptidase S8 propeptide/proteinase inhibitor I9"/>
    <property type="match status" value="1"/>
</dbReference>
<dbReference type="Gene3D" id="3.40.50.200">
    <property type="entry name" value="Peptidase S8/S53 domain"/>
    <property type="match status" value="1"/>
</dbReference>
<dbReference type="InterPro" id="IPR034193">
    <property type="entry name" value="PCSK9_ProteinaseK-like"/>
</dbReference>
<dbReference type="InterPro" id="IPR000209">
    <property type="entry name" value="Peptidase_S8/S53_dom"/>
</dbReference>
<dbReference type="InterPro" id="IPR036852">
    <property type="entry name" value="Peptidase_S8/S53_dom_sf"/>
</dbReference>
<dbReference type="InterPro" id="IPR023827">
    <property type="entry name" value="Peptidase_S8_Asp-AS"/>
</dbReference>
<dbReference type="InterPro" id="IPR022398">
    <property type="entry name" value="Peptidase_S8_His-AS"/>
</dbReference>
<dbReference type="InterPro" id="IPR023828">
    <property type="entry name" value="Peptidase_S8_Ser-AS"/>
</dbReference>
<dbReference type="InterPro" id="IPR050131">
    <property type="entry name" value="Peptidase_S8_subtilisin-like"/>
</dbReference>
<dbReference type="InterPro" id="IPR015500">
    <property type="entry name" value="Peptidase_S8_subtilisin-rel"/>
</dbReference>
<dbReference type="InterPro" id="IPR010259">
    <property type="entry name" value="S8pro/Inhibitor_I9"/>
</dbReference>
<dbReference type="InterPro" id="IPR037045">
    <property type="entry name" value="S8pro/Inhibitor_I9_sf"/>
</dbReference>
<dbReference type="PANTHER" id="PTHR43806:SF11">
    <property type="entry name" value="CEREVISIN-RELATED"/>
    <property type="match status" value="1"/>
</dbReference>
<dbReference type="PANTHER" id="PTHR43806">
    <property type="entry name" value="PEPTIDASE S8"/>
    <property type="match status" value="1"/>
</dbReference>
<dbReference type="Pfam" id="PF05922">
    <property type="entry name" value="Inhibitor_I9"/>
    <property type="match status" value="1"/>
</dbReference>
<dbReference type="Pfam" id="PF00082">
    <property type="entry name" value="Peptidase_S8"/>
    <property type="match status" value="1"/>
</dbReference>
<dbReference type="PRINTS" id="PR00723">
    <property type="entry name" value="SUBTILISIN"/>
</dbReference>
<dbReference type="SUPFAM" id="SSF54897">
    <property type="entry name" value="Protease propeptides/inhibitors"/>
    <property type="match status" value="1"/>
</dbReference>
<dbReference type="SUPFAM" id="SSF52743">
    <property type="entry name" value="Subtilisin-like"/>
    <property type="match status" value="1"/>
</dbReference>
<dbReference type="PROSITE" id="PS51892">
    <property type="entry name" value="SUBTILASE"/>
    <property type="match status" value="1"/>
</dbReference>
<dbReference type="PROSITE" id="PS00136">
    <property type="entry name" value="SUBTILASE_ASP"/>
    <property type="match status" value="1"/>
</dbReference>
<dbReference type="PROSITE" id="PS00137">
    <property type="entry name" value="SUBTILASE_HIS"/>
    <property type="match status" value="1"/>
</dbReference>
<dbReference type="PROSITE" id="PS00138">
    <property type="entry name" value="SUBTILASE_SER"/>
    <property type="match status" value="1"/>
</dbReference>
<reference key="1">
    <citation type="journal article" date="2012" name="MBio">
        <title>Comparative genome analysis of Trichophyton rubrum and related dermatophytes reveals candidate genes involved in infection.</title>
        <authorList>
            <person name="Martinez D.A."/>
            <person name="Oliver B.G."/>
            <person name="Graeser Y."/>
            <person name="Goldberg J.M."/>
            <person name="Li W."/>
            <person name="Martinez-Rossi N.M."/>
            <person name="Monod M."/>
            <person name="Shelest E."/>
            <person name="Barton R.C."/>
            <person name="Birch E."/>
            <person name="Brakhage A.A."/>
            <person name="Chen Z."/>
            <person name="Gurr S.J."/>
            <person name="Heiman D."/>
            <person name="Heitman J."/>
            <person name="Kosti I."/>
            <person name="Rossi A."/>
            <person name="Saif S."/>
            <person name="Samalova M."/>
            <person name="Saunders C.W."/>
            <person name="Shea T."/>
            <person name="Summerbell R.C."/>
            <person name="Xu J."/>
            <person name="Young S."/>
            <person name="Zeng Q."/>
            <person name="Birren B.W."/>
            <person name="Cuomo C.A."/>
            <person name="White T.C."/>
        </authorList>
    </citation>
    <scope>NUCLEOTIDE SEQUENCE [LARGE SCALE GENOMIC DNA]</scope>
    <source>
        <strain>ATCC MYA-4605 / CBS 113480</strain>
    </source>
</reference>
<keyword id="KW-0325">Glycoprotein</keyword>
<keyword id="KW-0378">Hydrolase</keyword>
<keyword id="KW-0645">Protease</keyword>
<keyword id="KW-1185">Reference proteome</keyword>
<keyword id="KW-0964">Secreted</keyword>
<keyword id="KW-0720">Serine protease</keyword>
<keyword id="KW-0732">Signal</keyword>
<keyword id="KW-0843">Virulence</keyword>
<keyword id="KW-0865">Zymogen</keyword>
<proteinExistence type="inferred from homology"/>
<organism>
    <name type="scientific">Arthroderma otae (strain ATCC MYA-4605 / CBS 113480)</name>
    <name type="common">Microsporum canis</name>
    <dbReference type="NCBI Taxonomy" id="554155"/>
    <lineage>
        <taxon>Eukaryota</taxon>
        <taxon>Fungi</taxon>
        <taxon>Dikarya</taxon>
        <taxon>Ascomycota</taxon>
        <taxon>Pezizomycotina</taxon>
        <taxon>Eurotiomycetes</taxon>
        <taxon>Eurotiomycetidae</taxon>
        <taxon>Onygenales</taxon>
        <taxon>Arthrodermataceae</taxon>
        <taxon>Microsporum</taxon>
    </lineage>
</organism>
<evidence type="ECO:0000250" key="1"/>
<evidence type="ECO:0000255" key="2"/>
<evidence type="ECO:0000255" key="3">
    <source>
        <dbReference type="PROSITE-ProRule" id="PRU01240"/>
    </source>
</evidence>
<evidence type="ECO:0000256" key="4">
    <source>
        <dbReference type="SAM" id="MobiDB-lite"/>
    </source>
</evidence>
<evidence type="ECO:0000305" key="5"/>
<protein>
    <recommendedName>
        <fullName>Subtilisin-like protease 5</fullName>
        <ecNumber>3.4.21.-</ecNumber>
    </recommendedName>
</protein>